<name>METK_METBF</name>
<comment type="function">
    <text evidence="1">Catalyzes the formation of S-adenosylmethionine from methionine and ATP.</text>
</comment>
<comment type="catalytic activity">
    <reaction evidence="1">
        <text>L-methionine + ATP + H2O = S-adenosyl-L-methionine + phosphate + diphosphate</text>
        <dbReference type="Rhea" id="RHEA:21080"/>
        <dbReference type="ChEBI" id="CHEBI:15377"/>
        <dbReference type="ChEBI" id="CHEBI:30616"/>
        <dbReference type="ChEBI" id="CHEBI:33019"/>
        <dbReference type="ChEBI" id="CHEBI:43474"/>
        <dbReference type="ChEBI" id="CHEBI:57844"/>
        <dbReference type="ChEBI" id="CHEBI:59789"/>
        <dbReference type="EC" id="2.5.1.6"/>
    </reaction>
</comment>
<comment type="cofactor">
    <cofactor evidence="1">
        <name>Mg(2+)</name>
        <dbReference type="ChEBI" id="CHEBI:18420"/>
    </cofactor>
</comment>
<comment type="pathway">
    <text evidence="1">Amino-acid biosynthesis; S-adenosyl-L-methionine biosynthesis; S-adenosyl-L-methionine from L-methionine: step 1/1.</text>
</comment>
<comment type="similarity">
    <text evidence="1">Belongs to the AdoMet synthase 2 family.</text>
</comment>
<reference key="1">
    <citation type="journal article" date="2006" name="J. Bacteriol.">
        <title>The Methanosarcina barkeri genome: comparative analysis with Methanosarcina acetivorans and Methanosarcina mazei reveals extensive rearrangement within methanosarcinal genomes.</title>
        <authorList>
            <person name="Maeder D.L."/>
            <person name="Anderson I."/>
            <person name="Brettin T.S."/>
            <person name="Bruce D.C."/>
            <person name="Gilna P."/>
            <person name="Han C.S."/>
            <person name="Lapidus A."/>
            <person name="Metcalf W.W."/>
            <person name="Saunders E."/>
            <person name="Tapia R."/>
            <person name="Sowers K.R."/>
        </authorList>
    </citation>
    <scope>NUCLEOTIDE SEQUENCE [LARGE SCALE GENOMIC DNA]</scope>
    <source>
        <strain>Fusaro / DSM 804</strain>
    </source>
</reference>
<gene>
    <name evidence="1" type="primary">mat</name>
    <name type="ordered locus">Mbar_A1313</name>
</gene>
<dbReference type="EC" id="2.5.1.6" evidence="1"/>
<dbReference type="EMBL" id="CP000099">
    <property type="protein sequence ID" value="AAZ70276.1"/>
    <property type="molecule type" value="Genomic_DNA"/>
</dbReference>
<dbReference type="SMR" id="Q46CW6"/>
<dbReference type="STRING" id="269797.Mbar_A1313"/>
<dbReference type="PaxDb" id="269797-Mbar_A1313"/>
<dbReference type="KEGG" id="mba:Mbar_A1313"/>
<dbReference type="eggNOG" id="arCOG01678">
    <property type="taxonomic scope" value="Archaea"/>
</dbReference>
<dbReference type="HOGENOM" id="CLU_057642_0_0_2"/>
<dbReference type="OrthoDB" id="204488at2157"/>
<dbReference type="UniPathway" id="UPA00315">
    <property type="reaction ID" value="UER00080"/>
</dbReference>
<dbReference type="GO" id="GO:0005524">
    <property type="term" value="F:ATP binding"/>
    <property type="evidence" value="ECO:0007669"/>
    <property type="project" value="UniProtKB-UniRule"/>
</dbReference>
<dbReference type="GO" id="GO:0000287">
    <property type="term" value="F:magnesium ion binding"/>
    <property type="evidence" value="ECO:0007669"/>
    <property type="project" value="UniProtKB-UniRule"/>
</dbReference>
<dbReference type="GO" id="GO:0004478">
    <property type="term" value="F:methionine adenosyltransferase activity"/>
    <property type="evidence" value="ECO:0007669"/>
    <property type="project" value="UniProtKB-UniRule"/>
</dbReference>
<dbReference type="GO" id="GO:0006730">
    <property type="term" value="P:one-carbon metabolic process"/>
    <property type="evidence" value="ECO:0007669"/>
    <property type="project" value="UniProtKB-KW"/>
</dbReference>
<dbReference type="GO" id="GO:0006556">
    <property type="term" value="P:S-adenosylmethionine biosynthetic process"/>
    <property type="evidence" value="ECO:0007669"/>
    <property type="project" value="UniProtKB-UniRule"/>
</dbReference>
<dbReference type="Gene3D" id="3.30.300.10">
    <property type="match status" value="1"/>
</dbReference>
<dbReference type="Gene3D" id="3.30.300.280">
    <property type="entry name" value="S-adenosylmethionine synthetase, C-terminal domain"/>
    <property type="match status" value="1"/>
</dbReference>
<dbReference type="HAMAP" id="MF_00136">
    <property type="entry name" value="S_AdoMet_synth2"/>
    <property type="match status" value="1"/>
</dbReference>
<dbReference type="InterPro" id="IPR027790">
    <property type="entry name" value="AdoMet_synthase_2_family"/>
</dbReference>
<dbReference type="InterPro" id="IPR042544">
    <property type="entry name" value="AdoMet_synthase_3"/>
</dbReference>
<dbReference type="InterPro" id="IPR002795">
    <property type="entry name" value="S-AdoMet_synthetase_arc"/>
</dbReference>
<dbReference type="NCBIfam" id="NF003364">
    <property type="entry name" value="PRK04439.1-3"/>
    <property type="match status" value="1"/>
</dbReference>
<dbReference type="NCBIfam" id="NF003366">
    <property type="entry name" value="PRK04439.1-5"/>
    <property type="match status" value="1"/>
</dbReference>
<dbReference type="PANTHER" id="PTHR36697">
    <property type="entry name" value="S-ADENOSYLMETHIONINE SYNTHASE"/>
    <property type="match status" value="1"/>
</dbReference>
<dbReference type="PANTHER" id="PTHR36697:SF1">
    <property type="entry name" value="S-ADENOSYLMETHIONINE SYNTHASE"/>
    <property type="match status" value="1"/>
</dbReference>
<dbReference type="Pfam" id="PF01941">
    <property type="entry name" value="AdoMet_Synthase"/>
    <property type="match status" value="1"/>
</dbReference>
<feature type="chain" id="PRO_0000259465" description="S-adenosylmethionine synthase">
    <location>
        <begin position="1"/>
        <end position="398"/>
    </location>
</feature>
<feature type="binding site" evidence="1">
    <location>
        <begin position="136"/>
        <end position="141"/>
    </location>
    <ligand>
        <name>ATP</name>
        <dbReference type="ChEBI" id="CHEBI:30616"/>
    </ligand>
</feature>
<organism>
    <name type="scientific">Methanosarcina barkeri (strain Fusaro / DSM 804)</name>
    <dbReference type="NCBI Taxonomy" id="269797"/>
    <lineage>
        <taxon>Archaea</taxon>
        <taxon>Methanobacteriati</taxon>
        <taxon>Methanobacteriota</taxon>
        <taxon>Stenosarchaea group</taxon>
        <taxon>Methanomicrobia</taxon>
        <taxon>Methanosarcinales</taxon>
        <taxon>Methanosarcinaceae</taxon>
        <taxon>Methanosarcina</taxon>
    </lineage>
</organism>
<protein>
    <recommendedName>
        <fullName evidence="1">S-adenosylmethionine synthase</fullName>
        <shortName evidence="1">AdoMet synthase</shortName>
        <ecNumber evidence="1">2.5.1.6</ecNumber>
    </recommendedName>
    <alternativeName>
        <fullName evidence="1">Methionine adenosyltransferase</fullName>
    </alternativeName>
</protein>
<evidence type="ECO:0000255" key="1">
    <source>
        <dbReference type="HAMAP-Rule" id="MF_00136"/>
    </source>
</evidence>
<proteinExistence type="inferred from homology"/>
<sequence>MARNIKVEELFQTPVEKQRIELVERKGIGHPDSISDGLAEAVSRALCREYISKCGAVLHHNTDETQIVAGRSSPRFGGGEILQPIYILLVGRATKEFEGVDLATESVALQAARQYLKNTLVNMDLERDVIMDCKLGTGSSDLRDVFKRDRIPVANDTSFGVGHAPFSELENLVYNTERQLLTDLKSRMPGIGEDMKVMGLRDGEDITLTICSGMIGRYIDDLDSYINMTQEMQTYVEEMATRYTERNVKVCINTGDNLKTSSIFLTVTGTSAEMGDDGSVGRGNRCNGLITPNRPMSMEATSGKNPINHIGKIYNLLSTQMARDIVKQVPEVQDVYIRLLSQIGKPIDQPLVASAQVIPKEGTSFAKVKAEAEVVMDDWLSNVTKITEMVIKGELDTF</sequence>
<accession>Q46CW6</accession>
<keyword id="KW-0067">ATP-binding</keyword>
<keyword id="KW-0460">Magnesium</keyword>
<keyword id="KW-0547">Nucleotide-binding</keyword>
<keyword id="KW-0554">One-carbon metabolism</keyword>
<keyword id="KW-0808">Transferase</keyword>